<proteinExistence type="inferred from homology"/>
<name>GLND_HAEIN</name>
<feature type="chain" id="PRO_0000192736" description="Bifunctional uridylyltransferase/uridylyl-removing enzyme">
    <location>
        <begin position="1"/>
        <end position="863"/>
    </location>
</feature>
<feature type="domain" description="HD" evidence="2">
    <location>
        <begin position="446"/>
        <end position="568"/>
    </location>
</feature>
<feature type="domain" description="ACT 1" evidence="1">
    <location>
        <begin position="688"/>
        <end position="764"/>
    </location>
</feature>
<feature type="domain" description="ACT 2" evidence="1">
    <location>
        <begin position="794"/>
        <end position="863"/>
    </location>
</feature>
<feature type="region of interest" description="Uridylyltransferase">
    <location>
        <begin position="1"/>
        <end position="328"/>
    </location>
</feature>
<feature type="region of interest" description="Uridylyl-removing">
    <location>
        <begin position="329"/>
        <end position="687"/>
    </location>
</feature>
<accession>P43919</accession>
<dbReference type="EC" id="2.7.7.59" evidence="1"/>
<dbReference type="EC" id="3.1.4.-" evidence="1"/>
<dbReference type="EMBL" id="L42023">
    <property type="protein sequence ID" value="AAC23362.1"/>
    <property type="molecule type" value="Genomic_DNA"/>
</dbReference>
<dbReference type="PIR" id="B64138">
    <property type="entry name" value="B64138"/>
</dbReference>
<dbReference type="RefSeq" id="NP_439860.1">
    <property type="nucleotide sequence ID" value="NC_000907.1"/>
</dbReference>
<dbReference type="SMR" id="P43919"/>
<dbReference type="STRING" id="71421.HI_1719"/>
<dbReference type="EnsemblBacteria" id="AAC23362">
    <property type="protein sequence ID" value="AAC23362"/>
    <property type="gene ID" value="HI_1719"/>
</dbReference>
<dbReference type="KEGG" id="hin:HI_1719"/>
<dbReference type="PATRIC" id="fig|71421.8.peg.1798"/>
<dbReference type="eggNOG" id="COG2844">
    <property type="taxonomic scope" value="Bacteria"/>
</dbReference>
<dbReference type="HOGENOM" id="CLU_012833_0_0_6"/>
<dbReference type="OrthoDB" id="9758038at2"/>
<dbReference type="PhylomeDB" id="P43919"/>
<dbReference type="BioCyc" id="HINF71421:G1GJ1-1734-MONOMER"/>
<dbReference type="Proteomes" id="UP000000579">
    <property type="component" value="Chromosome"/>
</dbReference>
<dbReference type="GO" id="GO:0008773">
    <property type="term" value="F:[protein-PII] uridylyltransferase activity"/>
    <property type="evidence" value="ECO:0000318"/>
    <property type="project" value="GO_Central"/>
</dbReference>
<dbReference type="GO" id="GO:0008081">
    <property type="term" value="F:phosphoric diester hydrolase activity"/>
    <property type="evidence" value="ECO:0007669"/>
    <property type="project" value="UniProtKB-UniRule"/>
</dbReference>
<dbReference type="GO" id="GO:0006808">
    <property type="term" value="P:regulation of nitrogen utilization"/>
    <property type="evidence" value="ECO:0007669"/>
    <property type="project" value="UniProtKB-UniRule"/>
</dbReference>
<dbReference type="CDD" id="cd04899">
    <property type="entry name" value="ACT_ACR-UUR-like_2"/>
    <property type="match status" value="1"/>
</dbReference>
<dbReference type="CDD" id="cd04900">
    <property type="entry name" value="ACT_UUR-like_1"/>
    <property type="match status" value="1"/>
</dbReference>
<dbReference type="CDD" id="cd00077">
    <property type="entry name" value="HDc"/>
    <property type="match status" value="1"/>
</dbReference>
<dbReference type="CDD" id="cd05401">
    <property type="entry name" value="NT_GlnE_GlnD_like"/>
    <property type="match status" value="1"/>
</dbReference>
<dbReference type="Gene3D" id="1.10.3210.10">
    <property type="entry name" value="Hypothetical protein af1432"/>
    <property type="match status" value="1"/>
</dbReference>
<dbReference type="HAMAP" id="MF_00277">
    <property type="entry name" value="PII_uridylyl_transf"/>
    <property type="match status" value="1"/>
</dbReference>
<dbReference type="InterPro" id="IPR045865">
    <property type="entry name" value="ACT-like_dom_sf"/>
</dbReference>
<dbReference type="InterPro" id="IPR002912">
    <property type="entry name" value="ACT_dom"/>
</dbReference>
<dbReference type="InterPro" id="IPR003607">
    <property type="entry name" value="HD/PDEase_dom"/>
</dbReference>
<dbReference type="InterPro" id="IPR006674">
    <property type="entry name" value="HD_domain"/>
</dbReference>
<dbReference type="InterPro" id="IPR043519">
    <property type="entry name" value="NT_sf"/>
</dbReference>
<dbReference type="InterPro" id="IPR013546">
    <property type="entry name" value="PII_UdlTrfase/GS_AdlTrfase"/>
</dbReference>
<dbReference type="InterPro" id="IPR010043">
    <property type="entry name" value="UTase/UR"/>
</dbReference>
<dbReference type="NCBIfam" id="NF002487">
    <property type="entry name" value="PRK01759.1"/>
    <property type="match status" value="1"/>
</dbReference>
<dbReference type="NCBIfam" id="TIGR01693">
    <property type="entry name" value="UTase_glnD"/>
    <property type="match status" value="1"/>
</dbReference>
<dbReference type="PANTHER" id="PTHR47320">
    <property type="entry name" value="BIFUNCTIONAL URIDYLYLTRANSFERASE/URIDYLYL-REMOVING ENZYME"/>
    <property type="match status" value="1"/>
</dbReference>
<dbReference type="PANTHER" id="PTHR47320:SF1">
    <property type="entry name" value="BIFUNCTIONAL URIDYLYLTRANSFERASE_URIDYLYL-REMOVING ENZYME"/>
    <property type="match status" value="1"/>
</dbReference>
<dbReference type="Pfam" id="PF01842">
    <property type="entry name" value="ACT"/>
    <property type="match status" value="2"/>
</dbReference>
<dbReference type="Pfam" id="PF08335">
    <property type="entry name" value="GlnD_UR_UTase"/>
    <property type="match status" value="1"/>
</dbReference>
<dbReference type="Pfam" id="PF01966">
    <property type="entry name" value="HD"/>
    <property type="match status" value="1"/>
</dbReference>
<dbReference type="PIRSF" id="PIRSF006288">
    <property type="entry name" value="PII_uridyltransf"/>
    <property type="match status" value="1"/>
</dbReference>
<dbReference type="SMART" id="SM00471">
    <property type="entry name" value="HDc"/>
    <property type="match status" value="1"/>
</dbReference>
<dbReference type="SUPFAM" id="SSF55021">
    <property type="entry name" value="ACT-like"/>
    <property type="match status" value="2"/>
</dbReference>
<dbReference type="SUPFAM" id="SSF109604">
    <property type="entry name" value="HD-domain/PDEase-like"/>
    <property type="match status" value="1"/>
</dbReference>
<dbReference type="SUPFAM" id="SSF81301">
    <property type="entry name" value="Nucleotidyltransferase"/>
    <property type="match status" value="1"/>
</dbReference>
<dbReference type="SUPFAM" id="SSF81593">
    <property type="entry name" value="Nucleotidyltransferase substrate binding subunit/domain"/>
    <property type="match status" value="1"/>
</dbReference>
<dbReference type="PROSITE" id="PS51671">
    <property type="entry name" value="ACT"/>
    <property type="match status" value="2"/>
</dbReference>
<dbReference type="PROSITE" id="PS51831">
    <property type="entry name" value="HD"/>
    <property type="match status" value="1"/>
</dbReference>
<reference key="1">
    <citation type="journal article" date="1995" name="Science">
        <title>Whole-genome random sequencing and assembly of Haemophilus influenzae Rd.</title>
        <authorList>
            <person name="Fleischmann R.D."/>
            <person name="Adams M.D."/>
            <person name="White O."/>
            <person name="Clayton R.A."/>
            <person name="Kirkness E.F."/>
            <person name="Kerlavage A.R."/>
            <person name="Bult C.J."/>
            <person name="Tomb J.-F."/>
            <person name="Dougherty B.A."/>
            <person name="Merrick J.M."/>
            <person name="McKenney K."/>
            <person name="Sutton G.G."/>
            <person name="FitzHugh W."/>
            <person name="Fields C.A."/>
            <person name="Gocayne J.D."/>
            <person name="Scott J.D."/>
            <person name="Shirley R."/>
            <person name="Liu L.-I."/>
            <person name="Glodek A."/>
            <person name="Kelley J.M."/>
            <person name="Weidman J.F."/>
            <person name="Phillips C.A."/>
            <person name="Spriggs T."/>
            <person name="Hedblom E."/>
            <person name="Cotton M.D."/>
            <person name="Utterback T.R."/>
            <person name="Hanna M.C."/>
            <person name="Nguyen D.T."/>
            <person name="Saudek D.M."/>
            <person name="Brandon R.C."/>
            <person name="Fine L.D."/>
            <person name="Fritchman J.L."/>
            <person name="Fuhrmann J.L."/>
            <person name="Geoghagen N.S.M."/>
            <person name="Gnehm C.L."/>
            <person name="McDonald L.A."/>
            <person name="Small K.V."/>
            <person name="Fraser C.M."/>
            <person name="Smith H.O."/>
            <person name="Venter J.C."/>
        </authorList>
    </citation>
    <scope>NUCLEOTIDE SEQUENCE [LARGE SCALE GENOMIC DNA]</scope>
    <source>
        <strain>ATCC 51907 / DSM 11121 / KW20 / Rd</strain>
    </source>
</reference>
<organism>
    <name type="scientific">Haemophilus influenzae (strain ATCC 51907 / DSM 11121 / KW20 / Rd)</name>
    <dbReference type="NCBI Taxonomy" id="71421"/>
    <lineage>
        <taxon>Bacteria</taxon>
        <taxon>Pseudomonadati</taxon>
        <taxon>Pseudomonadota</taxon>
        <taxon>Gammaproteobacteria</taxon>
        <taxon>Pasteurellales</taxon>
        <taxon>Pasteurellaceae</taxon>
        <taxon>Haemophilus</taxon>
    </lineage>
</organism>
<protein>
    <recommendedName>
        <fullName evidence="1">Bifunctional uridylyltransferase/uridylyl-removing enzyme</fullName>
        <shortName evidence="1">UTase/UR</shortName>
    </recommendedName>
    <alternativeName>
        <fullName evidence="1">Bifunctional [protein-PII] modification enzyme</fullName>
    </alternativeName>
    <alternativeName>
        <fullName evidence="1">Bifunctional nitrogen sensor protein</fullName>
    </alternativeName>
    <domain>
        <recommendedName>
            <fullName evidence="1">[Protein-PII] uridylyltransferase</fullName>
            <shortName evidence="1">PII uridylyltransferase</shortName>
            <shortName evidence="1">UTase</shortName>
            <ecNumber evidence="1">2.7.7.59</ecNumber>
        </recommendedName>
    </domain>
    <domain>
        <recommendedName>
            <fullName evidence="1">[Protein-PII]-UMP uridylyl-removing enzyme</fullName>
            <shortName evidence="1">UR</shortName>
            <ecNumber evidence="1">3.1.4.-</ecNumber>
        </recommendedName>
    </domain>
</protein>
<sequence>MLFSPTLSSLLTPSAVKIERENLKQFELENFSCYSIFELIENRCDFYDALLIQLWQEIGLSEQQGISLIAVGGYGRREMFPLSDLDFLILVEQTPSHEIEEKITQFIQFLWDCGFEVGNSVRTLEQCELEGKQDITIATNLLEARFLTGNRPHFDVLNELVKRADFWSKEDFFNAKVQEQIERYQRYHNTAYNLEPDIKFSPGGLRDLHLLYWVALRHSGALTLEAILQSGFIYPQEYQQLQESRAFLFKVRFALHLILKRYDNRLLFDRQIKVSELLGFRGEGNPAVEKMMKCFFQALHRISLISNLLIQHYRENVLSSNQDTVIDQLDDDFQLINQSLCLRNSFVFQEKPARILDLFFYLTQYEHVNIHSDTLRQLQISLEQLSQKLCEIPAAREKFLRLFNQSNAIKRAFMPMHQYGVLTAYLPQWQAIEGLMQFDLFHIYTVDEHTLRVMLKLESFLPKGSAQEHPIAHRIFSQLSDRTLLYIAALFHDIAKGRGGDHAELGAEDVADFAQLHGLDRREIDTLAWLVQSHLLMSITAQRRDIHDPEVVMNFAEAMQNQVRLDYLTCLTVADICATNGNLWNSWKRSLFASLYEFTEQQFSQGMKELLDYSEKSAENRKLAQQILTQDYSDITSISIEKLWTRCPEDYFVRNTPKQIAWHTSLLVDFVEALLVKISNRFSLGGTEVFIYCQDQPHLFNKVVSTIGAKKFSIHDAQIITTQDGYVFDSFIITELNGELVEFDRRRELEQALTVALQSEKLPALSIVPNRQLQHFTVQTDVRFLQENKKEHTEMELVALDKAGLLAQVSQIFTELNLNLLNAKITTVGEKAEDFFILTNQFGQALAREERERLNSVIIQQIR</sequence>
<gene>
    <name evidence="1" type="primary">glnD</name>
    <name type="ordered locus">HI_1719</name>
</gene>
<keyword id="KW-0378">Hydrolase</keyword>
<keyword id="KW-0460">Magnesium</keyword>
<keyword id="KW-0511">Multifunctional enzyme</keyword>
<keyword id="KW-0548">Nucleotidyltransferase</keyword>
<keyword id="KW-1185">Reference proteome</keyword>
<keyword id="KW-0677">Repeat</keyword>
<keyword id="KW-0808">Transferase</keyword>
<comment type="function">
    <text evidence="1">Modifies, by uridylylation and deuridylylation, the PII regulatory proteins (GlnB and homologs), in response to the nitrogen status of the cell that GlnD senses through the glutamine level. Under low glutamine levels, catalyzes the conversion of the PII proteins and UTP to PII-UMP and PPi, while under higher glutamine levels, GlnD hydrolyzes PII-UMP to PII and UMP (deuridylylation). Thus, controls uridylylation state and activity of the PII proteins, and plays an important role in the regulation of nitrogen assimilation and metabolism.</text>
</comment>
<comment type="catalytic activity">
    <reaction evidence="1">
        <text>[protein-PII]-L-tyrosine + UTP = [protein-PII]-uridylyl-L-tyrosine + diphosphate</text>
        <dbReference type="Rhea" id="RHEA:13673"/>
        <dbReference type="Rhea" id="RHEA-COMP:12147"/>
        <dbReference type="Rhea" id="RHEA-COMP:12148"/>
        <dbReference type="ChEBI" id="CHEBI:33019"/>
        <dbReference type="ChEBI" id="CHEBI:46398"/>
        <dbReference type="ChEBI" id="CHEBI:46858"/>
        <dbReference type="ChEBI" id="CHEBI:90602"/>
        <dbReference type="EC" id="2.7.7.59"/>
    </reaction>
</comment>
<comment type="catalytic activity">
    <reaction evidence="1">
        <text>[protein-PII]-uridylyl-L-tyrosine + H2O = [protein-PII]-L-tyrosine + UMP + H(+)</text>
        <dbReference type="Rhea" id="RHEA:48600"/>
        <dbReference type="Rhea" id="RHEA-COMP:12147"/>
        <dbReference type="Rhea" id="RHEA-COMP:12148"/>
        <dbReference type="ChEBI" id="CHEBI:15377"/>
        <dbReference type="ChEBI" id="CHEBI:15378"/>
        <dbReference type="ChEBI" id="CHEBI:46858"/>
        <dbReference type="ChEBI" id="CHEBI:57865"/>
        <dbReference type="ChEBI" id="CHEBI:90602"/>
    </reaction>
</comment>
<comment type="cofactor">
    <cofactor evidence="1">
        <name>Mg(2+)</name>
        <dbReference type="ChEBI" id="CHEBI:18420"/>
    </cofactor>
</comment>
<comment type="activity regulation">
    <text evidence="1">Uridylyltransferase (UTase) activity is inhibited by glutamine, while glutamine activates uridylyl-removing (UR) activity.</text>
</comment>
<comment type="domain">
    <text evidence="1">Has four distinct domains: an N-terminal nucleotidyltransferase (NT) domain responsible for UTase activity, a central HD domain that encodes UR activity, and two C-terminal ACT domains that seem to have a role in glutamine sensing.</text>
</comment>
<comment type="similarity">
    <text evidence="1">Belongs to the GlnD family.</text>
</comment>
<evidence type="ECO:0000255" key="1">
    <source>
        <dbReference type="HAMAP-Rule" id="MF_00277"/>
    </source>
</evidence>
<evidence type="ECO:0000255" key="2">
    <source>
        <dbReference type="PROSITE-ProRule" id="PRU01175"/>
    </source>
</evidence>